<evidence type="ECO:0000255" key="1">
    <source>
        <dbReference type="HAMAP-Rule" id="MF_01367"/>
    </source>
</evidence>
<evidence type="ECO:0000305" key="2"/>
<sequence length="122" mass="13433">MIQMQTNLDVADNSGARRVMCIKVLGGSKRKYASIGDIIVVSIKEAIPRGRVKKGDVMKAVVVRTAKDIRRPDGSVIRFDTNAAVLIDNKKEPIGTRIFGPVPRELRAKNHMKIISLAPEVL</sequence>
<dbReference type="EMBL" id="CP001389">
    <property type="protein sequence ID" value="ACP24983.1"/>
    <property type="molecule type" value="Genomic_DNA"/>
</dbReference>
<dbReference type="RefSeq" id="WP_012707761.1">
    <property type="nucleotide sequence ID" value="NC_012587.1"/>
</dbReference>
<dbReference type="RefSeq" id="YP_002825736.1">
    <property type="nucleotide sequence ID" value="NC_012587.1"/>
</dbReference>
<dbReference type="SMR" id="C3MAZ0"/>
<dbReference type="STRING" id="394.NGR_c12010"/>
<dbReference type="GeneID" id="48972691"/>
<dbReference type="KEGG" id="rhi:NGR_c12010"/>
<dbReference type="PATRIC" id="fig|394.7.peg.4017"/>
<dbReference type="eggNOG" id="COG0093">
    <property type="taxonomic scope" value="Bacteria"/>
</dbReference>
<dbReference type="HOGENOM" id="CLU_095071_2_1_5"/>
<dbReference type="OrthoDB" id="9806379at2"/>
<dbReference type="Proteomes" id="UP000001054">
    <property type="component" value="Chromosome"/>
</dbReference>
<dbReference type="GO" id="GO:0022625">
    <property type="term" value="C:cytosolic large ribosomal subunit"/>
    <property type="evidence" value="ECO:0007669"/>
    <property type="project" value="TreeGrafter"/>
</dbReference>
<dbReference type="GO" id="GO:0070180">
    <property type="term" value="F:large ribosomal subunit rRNA binding"/>
    <property type="evidence" value="ECO:0007669"/>
    <property type="project" value="TreeGrafter"/>
</dbReference>
<dbReference type="GO" id="GO:0003735">
    <property type="term" value="F:structural constituent of ribosome"/>
    <property type="evidence" value="ECO:0007669"/>
    <property type="project" value="InterPro"/>
</dbReference>
<dbReference type="GO" id="GO:0006412">
    <property type="term" value="P:translation"/>
    <property type="evidence" value="ECO:0007669"/>
    <property type="project" value="UniProtKB-UniRule"/>
</dbReference>
<dbReference type="CDD" id="cd00337">
    <property type="entry name" value="Ribosomal_uL14"/>
    <property type="match status" value="1"/>
</dbReference>
<dbReference type="FunFam" id="2.40.150.20:FF:000001">
    <property type="entry name" value="50S ribosomal protein L14"/>
    <property type="match status" value="1"/>
</dbReference>
<dbReference type="Gene3D" id="2.40.150.20">
    <property type="entry name" value="Ribosomal protein L14"/>
    <property type="match status" value="1"/>
</dbReference>
<dbReference type="HAMAP" id="MF_01367">
    <property type="entry name" value="Ribosomal_uL14"/>
    <property type="match status" value="1"/>
</dbReference>
<dbReference type="InterPro" id="IPR000218">
    <property type="entry name" value="Ribosomal_uL14"/>
</dbReference>
<dbReference type="InterPro" id="IPR005745">
    <property type="entry name" value="Ribosomal_uL14_bac-type"/>
</dbReference>
<dbReference type="InterPro" id="IPR019972">
    <property type="entry name" value="Ribosomal_uL14_CS"/>
</dbReference>
<dbReference type="InterPro" id="IPR036853">
    <property type="entry name" value="Ribosomal_uL14_sf"/>
</dbReference>
<dbReference type="NCBIfam" id="TIGR01067">
    <property type="entry name" value="rplN_bact"/>
    <property type="match status" value="1"/>
</dbReference>
<dbReference type="PANTHER" id="PTHR11761">
    <property type="entry name" value="50S/60S RIBOSOMAL PROTEIN L14/L23"/>
    <property type="match status" value="1"/>
</dbReference>
<dbReference type="PANTHER" id="PTHR11761:SF3">
    <property type="entry name" value="LARGE RIBOSOMAL SUBUNIT PROTEIN UL14M"/>
    <property type="match status" value="1"/>
</dbReference>
<dbReference type="Pfam" id="PF00238">
    <property type="entry name" value="Ribosomal_L14"/>
    <property type="match status" value="1"/>
</dbReference>
<dbReference type="SMART" id="SM01374">
    <property type="entry name" value="Ribosomal_L14"/>
    <property type="match status" value="1"/>
</dbReference>
<dbReference type="SUPFAM" id="SSF50193">
    <property type="entry name" value="Ribosomal protein L14"/>
    <property type="match status" value="1"/>
</dbReference>
<dbReference type="PROSITE" id="PS00049">
    <property type="entry name" value="RIBOSOMAL_L14"/>
    <property type="match status" value="1"/>
</dbReference>
<protein>
    <recommendedName>
        <fullName evidence="1">Large ribosomal subunit protein uL14</fullName>
    </recommendedName>
    <alternativeName>
        <fullName evidence="2">50S ribosomal protein L14</fullName>
    </alternativeName>
</protein>
<feature type="chain" id="PRO_1000166933" description="Large ribosomal subunit protein uL14">
    <location>
        <begin position="1"/>
        <end position="122"/>
    </location>
</feature>
<gene>
    <name evidence="1" type="primary">rplN</name>
    <name type="ordered locus">NGR_c12010</name>
</gene>
<reference key="1">
    <citation type="journal article" date="2009" name="Appl. Environ. Microbiol.">
        <title>Rhizobium sp. strain NGR234 possesses a remarkable number of secretion systems.</title>
        <authorList>
            <person name="Schmeisser C."/>
            <person name="Liesegang H."/>
            <person name="Krysciak D."/>
            <person name="Bakkou N."/>
            <person name="Le Quere A."/>
            <person name="Wollherr A."/>
            <person name="Heinemeyer I."/>
            <person name="Morgenstern B."/>
            <person name="Pommerening-Roeser A."/>
            <person name="Flores M."/>
            <person name="Palacios R."/>
            <person name="Brenner S."/>
            <person name="Gottschalk G."/>
            <person name="Schmitz R.A."/>
            <person name="Broughton W.J."/>
            <person name="Perret X."/>
            <person name="Strittmatter A.W."/>
            <person name="Streit W.R."/>
        </authorList>
    </citation>
    <scope>NUCLEOTIDE SEQUENCE [LARGE SCALE GENOMIC DNA]</scope>
    <source>
        <strain>NBRC 101917 / NGR234</strain>
    </source>
</reference>
<keyword id="KW-1185">Reference proteome</keyword>
<keyword id="KW-0687">Ribonucleoprotein</keyword>
<keyword id="KW-0689">Ribosomal protein</keyword>
<keyword id="KW-0694">RNA-binding</keyword>
<keyword id="KW-0699">rRNA-binding</keyword>
<name>RL14_SINFN</name>
<comment type="function">
    <text evidence="1">Binds to 23S rRNA. Forms part of two intersubunit bridges in the 70S ribosome.</text>
</comment>
<comment type="subunit">
    <text evidence="1">Part of the 50S ribosomal subunit. Forms a cluster with proteins L3 and L19. In the 70S ribosome, L14 and L19 interact and together make contacts with the 16S rRNA in bridges B5 and B8.</text>
</comment>
<comment type="similarity">
    <text evidence="1">Belongs to the universal ribosomal protein uL14 family.</text>
</comment>
<accession>C3MAZ0</accession>
<proteinExistence type="inferred from homology"/>
<organism>
    <name type="scientific">Sinorhizobium fredii (strain NBRC 101917 / NGR234)</name>
    <dbReference type="NCBI Taxonomy" id="394"/>
    <lineage>
        <taxon>Bacteria</taxon>
        <taxon>Pseudomonadati</taxon>
        <taxon>Pseudomonadota</taxon>
        <taxon>Alphaproteobacteria</taxon>
        <taxon>Hyphomicrobiales</taxon>
        <taxon>Rhizobiaceae</taxon>
        <taxon>Sinorhizobium/Ensifer group</taxon>
        <taxon>Sinorhizobium</taxon>
    </lineage>
</organism>